<feature type="chain" id="PRO_1000198930" description="Arginine--tRNA ligase">
    <location>
        <begin position="1"/>
        <end position="581"/>
    </location>
</feature>
<feature type="short sequence motif" description="'HIGH' region">
    <location>
        <begin position="126"/>
        <end position="136"/>
    </location>
</feature>
<organism>
    <name type="scientific">Shewanella baltica (strain OS223)</name>
    <dbReference type="NCBI Taxonomy" id="407976"/>
    <lineage>
        <taxon>Bacteria</taxon>
        <taxon>Pseudomonadati</taxon>
        <taxon>Pseudomonadota</taxon>
        <taxon>Gammaproteobacteria</taxon>
        <taxon>Alteromonadales</taxon>
        <taxon>Shewanellaceae</taxon>
        <taxon>Shewanella</taxon>
    </lineage>
</organism>
<dbReference type="EC" id="6.1.1.19" evidence="1"/>
<dbReference type="EMBL" id="CP001252">
    <property type="protein sequence ID" value="ACK45032.1"/>
    <property type="molecule type" value="Genomic_DNA"/>
</dbReference>
<dbReference type="RefSeq" id="WP_006083280.1">
    <property type="nucleotide sequence ID" value="NC_011663.1"/>
</dbReference>
<dbReference type="SMR" id="B8E6G9"/>
<dbReference type="GeneID" id="11770825"/>
<dbReference type="KEGG" id="sbp:Sbal223_0498"/>
<dbReference type="HOGENOM" id="CLU_006406_5_1_6"/>
<dbReference type="Proteomes" id="UP000002507">
    <property type="component" value="Chromosome"/>
</dbReference>
<dbReference type="GO" id="GO:0005737">
    <property type="term" value="C:cytoplasm"/>
    <property type="evidence" value="ECO:0007669"/>
    <property type="project" value="UniProtKB-SubCell"/>
</dbReference>
<dbReference type="GO" id="GO:0004814">
    <property type="term" value="F:arginine-tRNA ligase activity"/>
    <property type="evidence" value="ECO:0007669"/>
    <property type="project" value="UniProtKB-UniRule"/>
</dbReference>
<dbReference type="GO" id="GO:0005524">
    <property type="term" value="F:ATP binding"/>
    <property type="evidence" value="ECO:0007669"/>
    <property type="project" value="UniProtKB-UniRule"/>
</dbReference>
<dbReference type="GO" id="GO:0006420">
    <property type="term" value="P:arginyl-tRNA aminoacylation"/>
    <property type="evidence" value="ECO:0007669"/>
    <property type="project" value="UniProtKB-UniRule"/>
</dbReference>
<dbReference type="CDD" id="cd07956">
    <property type="entry name" value="Anticodon_Ia_Arg"/>
    <property type="match status" value="1"/>
</dbReference>
<dbReference type="CDD" id="cd00671">
    <property type="entry name" value="ArgRS_core"/>
    <property type="match status" value="1"/>
</dbReference>
<dbReference type="FunFam" id="1.10.730.10:FF:000001">
    <property type="entry name" value="Arginine--tRNA ligase"/>
    <property type="match status" value="1"/>
</dbReference>
<dbReference type="FunFam" id="3.30.1360.70:FF:000003">
    <property type="entry name" value="Arginine--tRNA ligase"/>
    <property type="match status" value="1"/>
</dbReference>
<dbReference type="FunFam" id="3.40.50.620:FF:000030">
    <property type="entry name" value="Arginine--tRNA ligase"/>
    <property type="match status" value="1"/>
</dbReference>
<dbReference type="Gene3D" id="3.30.1360.70">
    <property type="entry name" value="Arginyl tRNA synthetase N-terminal domain"/>
    <property type="match status" value="1"/>
</dbReference>
<dbReference type="Gene3D" id="3.40.50.620">
    <property type="entry name" value="HUPs"/>
    <property type="match status" value="1"/>
</dbReference>
<dbReference type="Gene3D" id="1.10.730.10">
    <property type="entry name" value="Isoleucyl-tRNA Synthetase, Domain 1"/>
    <property type="match status" value="1"/>
</dbReference>
<dbReference type="HAMAP" id="MF_00123">
    <property type="entry name" value="Arg_tRNA_synth"/>
    <property type="match status" value="1"/>
</dbReference>
<dbReference type="InterPro" id="IPR001412">
    <property type="entry name" value="aa-tRNA-synth_I_CS"/>
</dbReference>
<dbReference type="InterPro" id="IPR001278">
    <property type="entry name" value="Arg-tRNA-ligase"/>
</dbReference>
<dbReference type="InterPro" id="IPR005148">
    <property type="entry name" value="Arg-tRNA-synth_N"/>
</dbReference>
<dbReference type="InterPro" id="IPR036695">
    <property type="entry name" value="Arg-tRNA-synth_N_sf"/>
</dbReference>
<dbReference type="InterPro" id="IPR035684">
    <property type="entry name" value="ArgRS_core"/>
</dbReference>
<dbReference type="InterPro" id="IPR008909">
    <property type="entry name" value="DALR_anticod-bd"/>
</dbReference>
<dbReference type="InterPro" id="IPR014729">
    <property type="entry name" value="Rossmann-like_a/b/a_fold"/>
</dbReference>
<dbReference type="InterPro" id="IPR009080">
    <property type="entry name" value="tRNAsynth_Ia_anticodon-bd"/>
</dbReference>
<dbReference type="NCBIfam" id="TIGR00456">
    <property type="entry name" value="argS"/>
    <property type="match status" value="1"/>
</dbReference>
<dbReference type="PANTHER" id="PTHR11956:SF5">
    <property type="entry name" value="ARGININE--TRNA LIGASE, CYTOPLASMIC"/>
    <property type="match status" value="1"/>
</dbReference>
<dbReference type="PANTHER" id="PTHR11956">
    <property type="entry name" value="ARGINYL-TRNA SYNTHETASE"/>
    <property type="match status" value="1"/>
</dbReference>
<dbReference type="Pfam" id="PF03485">
    <property type="entry name" value="Arg_tRNA_synt_N"/>
    <property type="match status" value="1"/>
</dbReference>
<dbReference type="Pfam" id="PF05746">
    <property type="entry name" value="DALR_1"/>
    <property type="match status" value="1"/>
</dbReference>
<dbReference type="Pfam" id="PF00750">
    <property type="entry name" value="tRNA-synt_1d"/>
    <property type="match status" value="1"/>
</dbReference>
<dbReference type="PRINTS" id="PR01038">
    <property type="entry name" value="TRNASYNTHARG"/>
</dbReference>
<dbReference type="SMART" id="SM01016">
    <property type="entry name" value="Arg_tRNA_synt_N"/>
    <property type="match status" value="1"/>
</dbReference>
<dbReference type="SMART" id="SM00836">
    <property type="entry name" value="DALR_1"/>
    <property type="match status" value="1"/>
</dbReference>
<dbReference type="SUPFAM" id="SSF47323">
    <property type="entry name" value="Anticodon-binding domain of a subclass of class I aminoacyl-tRNA synthetases"/>
    <property type="match status" value="1"/>
</dbReference>
<dbReference type="SUPFAM" id="SSF55190">
    <property type="entry name" value="Arginyl-tRNA synthetase (ArgRS), N-terminal 'additional' domain"/>
    <property type="match status" value="1"/>
</dbReference>
<dbReference type="SUPFAM" id="SSF52374">
    <property type="entry name" value="Nucleotidylyl transferase"/>
    <property type="match status" value="1"/>
</dbReference>
<dbReference type="PROSITE" id="PS00178">
    <property type="entry name" value="AA_TRNA_LIGASE_I"/>
    <property type="match status" value="1"/>
</dbReference>
<sequence length="581" mass="64892">MKSHIQSLLEQTLESFKQQGIVPADFEARIQVDRTKDKSHGDLATNLAMMLTKVAGKNPRELAQLIIDTLPASAYVAKVEIAGPGFINFFINDSALADQLQNAVNDEHLGIKLPTPQTVVVDYSSPNLAKEMHVGHLRSTIIGDSVVRALEFLGHKVIRQNHVGDWGTQFGMLLAYMEELRAKNGEKAQLELSDLENFYRAAKLRFDESAEFATRARQLVVELQSGDEYCNKLWREFNDISLSHCHEVYARLGVSLTRADVHGESAYNADLEQVVKDLDAQGLLTESNGAKVVFQEAFRNKEGEPLPVIIQKADGGYLYATSDLAAMRYRSNVLKADRVLYFVDLRQALHFQQVFSLAKLAKFVREDMSLEHLGFGTMNGEDGRPFKTRSGGVVKLVDLLEEANVRALELVRSKNPDMDEVTLTEIARVVGISAVKYADLSKNRTSDYIFSFEQMLSFEGNTAPYLLYAYTRVAGIFKRVTDLDLSQAKIVLEHEKEKDLGNKLAQFGEILSRVVDKGQPHVLCAYLYELAGAFSSFYEACPVLAADNDAQKNSRLLLAQLTARTLQKGLNLLGIETLERM</sequence>
<comment type="catalytic activity">
    <reaction evidence="1">
        <text>tRNA(Arg) + L-arginine + ATP = L-arginyl-tRNA(Arg) + AMP + diphosphate</text>
        <dbReference type="Rhea" id="RHEA:20301"/>
        <dbReference type="Rhea" id="RHEA-COMP:9658"/>
        <dbReference type="Rhea" id="RHEA-COMP:9673"/>
        <dbReference type="ChEBI" id="CHEBI:30616"/>
        <dbReference type="ChEBI" id="CHEBI:32682"/>
        <dbReference type="ChEBI" id="CHEBI:33019"/>
        <dbReference type="ChEBI" id="CHEBI:78442"/>
        <dbReference type="ChEBI" id="CHEBI:78513"/>
        <dbReference type="ChEBI" id="CHEBI:456215"/>
        <dbReference type="EC" id="6.1.1.19"/>
    </reaction>
</comment>
<comment type="subunit">
    <text evidence="1">Monomer.</text>
</comment>
<comment type="subcellular location">
    <subcellularLocation>
        <location evidence="1">Cytoplasm</location>
    </subcellularLocation>
</comment>
<comment type="similarity">
    <text evidence="1">Belongs to the class-I aminoacyl-tRNA synthetase family.</text>
</comment>
<protein>
    <recommendedName>
        <fullName evidence="1">Arginine--tRNA ligase</fullName>
        <ecNumber evidence="1">6.1.1.19</ecNumber>
    </recommendedName>
    <alternativeName>
        <fullName evidence="1">Arginyl-tRNA synthetase</fullName>
        <shortName evidence="1">ArgRS</shortName>
    </alternativeName>
</protein>
<evidence type="ECO:0000255" key="1">
    <source>
        <dbReference type="HAMAP-Rule" id="MF_00123"/>
    </source>
</evidence>
<reference key="1">
    <citation type="submission" date="2008-12" db="EMBL/GenBank/DDBJ databases">
        <title>Complete sequence of chromosome of Shewanella baltica OS223.</title>
        <authorList>
            <consortium name="US DOE Joint Genome Institute"/>
            <person name="Lucas S."/>
            <person name="Copeland A."/>
            <person name="Lapidus A."/>
            <person name="Glavina del Rio T."/>
            <person name="Dalin E."/>
            <person name="Tice H."/>
            <person name="Bruce D."/>
            <person name="Goodwin L."/>
            <person name="Pitluck S."/>
            <person name="Chertkov O."/>
            <person name="Meincke L."/>
            <person name="Brettin T."/>
            <person name="Detter J.C."/>
            <person name="Han C."/>
            <person name="Kuske C.R."/>
            <person name="Larimer F."/>
            <person name="Land M."/>
            <person name="Hauser L."/>
            <person name="Kyrpides N."/>
            <person name="Ovchinnikova G."/>
            <person name="Brettar I."/>
            <person name="Rodrigues J."/>
            <person name="Konstantinidis K."/>
            <person name="Tiedje J."/>
        </authorList>
    </citation>
    <scope>NUCLEOTIDE SEQUENCE [LARGE SCALE GENOMIC DNA]</scope>
    <source>
        <strain>OS223</strain>
    </source>
</reference>
<accession>B8E6G9</accession>
<gene>
    <name evidence="1" type="primary">argS</name>
    <name type="ordered locus">Sbal223_0498</name>
</gene>
<keyword id="KW-0030">Aminoacyl-tRNA synthetase</keyword>
<keyword id="KW-0067">ATP-binding</keyword>
<keyword id="KW-0963">Cytoplasm</keyword>
<keyword id="KW-0436">Ligase</keyword>
<keyword id="KW-0547">Nucleotide-binding</keyword>
<keyword id="KW-0648">Protein biosynthesis</keyword>
<proteinExistence type="inferred from homology"/>
<name>SYR_SHEB2</name>